<evidence type="ECO:0000250" key="1"/>
<evidence type="ECO:0000255" key="2">
    <source>
        <dbReference type="PROSITE-ProRule" id="PRU00448"/>
    </source>
</evidence>
<evidence type="ECO:0000305" key="3"/>
<organism>
    <name type="scientific">Zea mays</name>
    <name type="common">Maize</name>
    <dbReference type="NCBI Taxonomy" id="4577"/>
    <lineage>
        <taxon>Eukaryota</taxon>
        <taxon>Viridiplantae</taxon>
        <taxon>Streptophyta</taxon>
        <taxon>Embryophyta</taxon>
        <taxon>Tracheophyta</taxon>
        <taxon>Spermatophyta</taxon>
        <taxon>Magnoliopsida</taxon>
        <taxon>Liliopsida</taxon>
        <taxon>Poales</taxon>
        <taxon>Poaceae</taxon>
        <taxon>PACMAD clade</taxon>
        <taxon>Panicoideae</taxon>
        <taxon>Andropogonodae</taxon>
        <taxon>Andropogoneae</taxon>
        <taxon>Tripsacinae</taxon>
        <taxon>Zea</taxon>
    </lineage>
</organism>
<gene>
    <name type="primary">CALM1</name>
</gene>
<sequence length="149" mass="16812">MADQLTDEQIAEFKEAFSLFDKDGDGCITTKELGTVMRSLGQNPTEAELQDMINEVDADGNGTIDFPELLNLMARKMKDTDSEEELKEAFRVFDKDQNGFISAAELRHVMTNLGEKLTDEEVDEMIREADVDGDGQINYEEFVKVMMAK</sequence>
<dbReference type="EMBL" id="X74490">
    <property type="protein sequence ID" value="CAA52602.1"/>
    <property type="molecule type" value="mRNA"/>
</dbReference>
<dbReference type="PIR" id="S58924">
    <property type="entry name" value="S40086"/>
</dbReference>
<dbReference type="SMR" id="P41040"/>
<dbReference type="STRING" id="4577.P41040"/>
<dbReference type="PaxDb" id="4577-GRMZM2G004703_P01"/>
<dbReference type="MaizeGDB" id="64086"/>
<dbReference type="eggNOG" id="KOG0027">
    <property type="taxonomic scope" value="Eukaryota"/>
</dbReference>
<dbReference type="InParanoid" id="P41040"/>
<dbReference type="Proteomes" id="UP000007305">
    <property type="component" value="Unplaced"/>
</dbReference>
<dbReference type="ExpressionAtlas" id="P41040">
    <property type="expression patterns" value="baseline and differential"/>
</dbReference>
<dbReference type="GO" id="GO:0005737">
    <property type="term" value="C:cytoplasm"/>
    <property type="evidence" value="ECO:0000318"/>
    <property type="project" value="GO_Central"/>
</dbReference>
<dbReference type="GO" id="GO:0005509">
    <property type="term" value="F:calcium ion binding"/>
    <property type="evidence" value="ECO:0000318"/>
    <property type="project" value="GO_Central"/>
</dbReference>
<dbReference type="GO" id="GO:0030234">
    <property type="term" value="F:enzyme regulator activity"/>
    <property type="evidence" value="ECO:0000318"/>
    <property type="project" value="GO_Central"/>
</dbReference>
<dbReference type="CDD" id="cd00051">
    <property type="entry name" value="EFh"/>
    <property type="match status" value="2"/>
</dbReference>
<dbReference type="FunFam" id="1.10.238.10:FF:000034">
    <property type="entry name" value="Calmodulin"/>
    <property type="match status" value="1"/>
</dbReference>
<dbReference type="FunFam" id="1.10.238.10:FF:000042">
    <property type="entry name" value="Calmodulin"/>
    <property type="match status" value="1"/>
</dbReference>
<dbReference type="Gene3D" id="1.10.238.10">
    <property type="entry name" value="EF-hand"/>
    <property type="match status" value="3"/>
</dbReference>
<dbReference type="InterPro" id="IPR050230">
    <property type="entry name" value="CALM/Myosin/TropC-like"/>
</dbReference>
<dbReference type="InterPro" id="IPR011992">
    <property type="entry name" value="EF-hand-dom_pair"/>
</dbReference>
<dbReference type="InterPro" id="IPR018247">
    <property type="entry name" value="EF_Hand_1_Ca_BS"/>
</dbReference>
<dbReference type="InterPro" id="IPR002048">
    <property type="entry name" value="EF_hand_dom"/>
</dbReference>
<dbReference type="PANTHER" id="PTHR23048:SF53">
    <property type="entry name" value="CALMODULIN"/>
    <property type="match status" value="1"/>
</dbReference>
<dbReference type="PANTHER" id="PTHR23048">
    <property type="entry name" value="MYOSIN LIGHT CHAIN 1, 3"/>
    <property type="match status" value="1"/>
</dbReference>
<dbReference type="Pfam" id="PF13499">
    <property type="entry name" value="EF-hand_7"/>
    <property type="match status" value="2"/>
</dbReference>
<dbReference type="SMART" id="SM00054">
    <property type="entry name" value="EFh"/>
    <property type="match status" value="4"/>
</dbReference>
<dbReference type="SUPFAM" id="SSF47473">
    <property type="entry name" value="EF-hand"/>
    <property type="match status" value="1"/>
</dbReference>
<dbReference type="PROSITE" id="PS00018">
    <property type="entry name" value="EF_HAND_1"/>
    <property type="match status" value="4"/>
</dbReference>
<dbReference type="PROSITE" id="PS50222">
    <property type="entry name" value="EF_HAND_2"/>
    <property type="match status" value="4"/>
</dbReference>
<name>CALM_MAIZE</name>
<feature type="initiator methionine" description="Removed" evidence="1">
    <location>
        <position position="1"/>
    </location>
</feature>
<feature type="chain" id="PRO_0000198294" description="Calmodulin">
    <location>
        <begin position="2"/>
        <end position="149"/>
    </location>
</feature>
<feature type="domain" description="EF-hand 1" evidence="2">
    <location>
        <begin position="8"/>
        <end position="43"/>
    </location>
</feature>
<feature type="domain" description="EF-hand 2" evidence="2">
    <location>
        <begin position="44"/>
        <end position="79"/>
    </location>
</feature>
<feature type="domain" description="EF-hand 3" evidence="2">
    <location>
        <begin position="81"/>
        <end position="116"/>
    </location>
</feature>
<feature type="domain" description="EF-hand 4" evidence="2">
    <location>
        <begin position="117"/>
        <end position="149"/>
    </location>
</feature>
<feature type="binding site" evidence="2">
    <location>
        <position position="21"/>
    </location>
    <ligand>
        <name>Ca(2+)</name>
        <dbReference type="ChEBI" id="CHEBI:29108"/>
        <label>1</label>
    </ligand>
</feature>
<feature type="binding site" evidence="2">
    <location>
        <position position="23"/>
    </location>
    <ligand>
        <name>Ca(2+)</name>
        <dbReference type="ChEBI" id="CHEBI:29108"/>
        <label>1</label>
    </ligand>
</feature>
<feature type="binding site" evidence="2">
    <location>
        <position position="25"/>
    </location>
    <ligand>
        <name>Ca(2+)</name>
        <dbReference type="ChEBI" id="CHEBI:29108"/>
        <label>1</label>
    </ligand>
</feature>
<feature type="binding site" evidence="2">
    <location>
        <position position="27"/>
    </location>
    <ligand>
        <name>Ca(2+)</name>
        <dbReference type="ChEBI" id="CHEBI:29108"/>
        <label>1</label>
    </ligand>
</feature>
<feature type="binding site" evidence="2">
    <location>
        <position position="32"/>
    </location>
    <ligand>
        <name>Ca(2+)</name>
        <dbReference type="ChEBI" id="CHEBI:29108"/>
        <label>1</label>
    </ligand>
</feature>
<feature type="binding site" evidence="2">
    <location>
        <position position="57"/>
    </location>
    <ligand>
        <name>Ca(2+)</name>
        <dbReference type="ChEBI" id="CHEBI:29108"/>
        <label>2</label>
    </ligand>
</feature>
<feature type="binding site" evidence="2">
    <location>
        <position position="59"/>
    </location>
    <ligand>
        <name>Ca(2+)</name>
        <dbReference type="ChEBI" id="CHEBI:29108"/>
        <label>2</label>
    </ligand>
</feature>
<feature type="binding site" evidence="2">
    <location>
        <position position="61"/>
    </location>
    <ligand>
        <name>Ca(2+)</name>
        <dbReference type="ChEBI" id="CHEBI:29108"/>
        <label>2</label>
    </ligand>
</feature>
<feature type="binding site" evidence="2">
    <location>
        <position position="63"/>
    </location>
    <ligand>
        <name>Ca(2+)</name>
        <dbReference type="ChEBI" id="CHEBI:29108"/>
        <label>2</label>
    </ligand>
</feature>
<feature type="binding site" evidence="2">
    <location>
        <position position="68"/>
    </location>
    <ligand>
        <name>Ca(2+)</name>
        <dbReference type="ChEBI" id="CHEBI:29108"/>
        <label>2</label>
    </ligand>
</feature>
<feature type="binding site" evidence="2">
    <location>
        <position position="94"/>
    </location>
    <ligand>
        <name>Ca(2+)</name>
        <dbReference type="ChEBI" id="CHEBI:29108"/>
        <label>3</label>
    </ligand>
</feature>
<feature type="binding site" evidence="2">
    <location>
        <position position="96"/>
    </location>
    <ligand>
        <name>Ca(2+)</name>
        <dbReference type="ChEBI" id="CHEBI:29108"/>
        <label>3</label>
    </ligand>
</feature>
<feature type="binding site" evidence="2">
    <location>
        <position position="98"/>
    </location>
    <ligand>
        <name>Ca(2+)</name>
        <dbReference type="ChEBI" id="CHEBI:29108"/>
        <label>3</label>
    </ligand>
</feature>
<feature type="binding site" evidence="2">
    <location>
        <position position="105"/>
    </location>
    <ligand>
        <name>Ca(2+)</name>
        <dbReference type="ChEBI" id="CHEBI:29108"/>
        <label>3</label>
    </ligand>
</feature>
<feature type="binding site" evidence="2">
    <location>
        <position position="130"/>
    </location>
    <ligand>
        <name>Ca(2+)</name>
        <dbReference type="ChEBI" id="CHEBI:29108"/>
        <label>4</label>
    </ligand>
</feature>
<feature type="binding site" evidence="2">
    <location>
        <position position="132"/>
    </location>
    <ligand>
        <name>Ca(2+)</name>
        <dbReference type="ChEBI" id="CHEBI:29108"/>
        <label>4</label>
    </ligand>
</feature>
<feature type="binding site" evidence="2">
    <location>
        <position position="134"/>
    </location>
    <ligand>
        <name>Ca(2+)</name>
        <dbReference type="ChEBI" id="CHEBI:29108"/>
        <label>4</label>
    </ligand>
</feature>
<feature type="binding site" evidence="2">
    <location>
        <position position="136"/>
    </location>
    <ligand>
        <name>Ca(2+)</name>
        <dbReference type="ChEBI" id="CHEBI:29108"/>
        <label>4</label>
    </ligand>
</feature>
<feature type="binding site" evidence="2">
    <location>
        <position position="141"/>
    </location>
    <ligand>
        <name>Ca(2+)</name>
        <dbReference type="ChEBI" id="CHEBI:29108"/>
        <label>4</label>
    </ligand>
</feature>
<feature type="modified residue" description="N-acetylalanine" evidence="1">
    <location>
        <position position="2"/>
    </location>
</feature>
<feature type="modified residue" description="N6,N6,N6-trimethyllysine" evidence="1">
    <location>
        <position position="116"/>
    </location>
</feature>
<reference key="1">
    <citation type="journal article" date="1994" name="Plant Physiol.">
        <title>Isolation and sequence comparison of a maize calmodulin cDNA.</title>
        <authorList>
            <person name="Griess E.A."/>
            <person name="Igloi G."/>
            <person name="Feix G."/>
        </authorList>
    </citation>
    <scope>NUCLEOTIDE SEQUENCE [MRNA]</scope>
    <source>
        <strain>cv. B73</strain>
    </source>
</reference>
<protein>
    <recommendedName>
        <fullName>Calmodulin</fullName>
        <shortName>CaM</shortName>
    </recommendedName>
</protein>
<accession>P41040</accession>
<comment type="function">
    <text>Calmodulin mediates the control of a large number of enzymes, ion channels and other proteins by Ca(2+). Among the enzymes to be stimulated by the calmodulin-Ca(2+) complex are a number of protein kinases and phosphatases.</text>
</comment>
<comment type="miscellaneous">
    <text>This protein has four functional calcium-binding sites.</text>
</comment>
<comment type="similarity">
    <text evidence="3">Belongs to the calmodulin family.</text>
</comment>
<keyword id="KW-0007">Acetylation</keyword>
<keyword id="KW-0106">Calcium</keyword>
<keyword id="KW-0479">Metal-binding</keyword>
<keyword id="KW-0488">Methylation</keyword>
<keyword id="KW-1185">Reference proteome</keyword>
<keyword id="KW-0677">Repeat</keyword>
<proteinExistence type="evidence at transcript level"/>